<sequence length="829" mass="90819">MTAKFDVDYVLANITEDDKIALLSGSDFWHTHAIPKFNVPPIRTTDGPNGIRGTKFFAGVPAACLPCGTALGATWDRDLLHQAGVLLGKECLAKGAHCWLGPTINMQRSPLGGRGFESFAEDPHLSGIMAKSIILGCESTGVISTVKHYVGNDQEHERRAVDVLVTPRALREIYLRPFQIVARDAHPGALMTSYNKINGKHVVENPAMLDIVRKDWNWDPLIMSDWLGTYTTIDSMNAGLDLEMPGPTRYRGKYIESAMQARLIKQSTINKRARKVLEFVQRASRAPVSADETGRDFPEDRALNRTLCANSIVLLKNDGNLLPIPKTVKKIALIGSHVKTPAISGGGSASLEPYYAVSLYDAVVEALPDAKILYEAGAYAHKMLPVIDRMLSNAVIHFYNEPPEKERTLLATEPVVNTAFQLMDYNAPGLNRGLFWATLIGEFTPDVSGLWDFGLTVFGTATLFVDDEMVIDNTTRQTRGTAFFGKGTVQEVGQKQLTAGQTYKIRIEFGSANTSPMKAIGVVHFGGGAAHLGACLHMDPEQMVANAVKVAAEADYTIVCTGLNRDWESEGFDRPDMDLPPGIDALISSVLDLAADRTVIVNQSGTPVTLPWADRARGVVQAWYGGNETGHGIADVLFGDVNPCGKLPLSWPVDVKHNPAYLNNMSVGGRMLYGEDVYMGYRFYEKVGREVLFPFGHGLSYTTFSVSPEATVSPSVFSSDSPPTARVLVKNTGPVAGAQILQLYIAAPNSATPRPVKELHGFTKVFLQPGEERTVAIHIDKYATSFWDEIEDMWKSEEGVYQVLIGTSSQEIVSRGEFRVEQTRYWRGV</sequence>
<proteinExistence type="inferred from homology"/>
<evidence type="ECO:0000250" key="1"/>
<evidence type="ECO:0000255" key="2"/>
<evidence type="ECO:0000255" key="3">
    <source>
        <dbReference type="PROSITE-ProRule" id="PRU01164"/>
    </source>
</evidence>
<evidence type="ECO:0000305" key="4"/>
<name>BGLH_NEOFI</name>
<feature type="chain" id="PRO_0000394882" description="Probable beta-glucosidase H">
    <location>
        <begin position="1"/>
        <end position="829"/>
    </location>
</feature>
<feature type="domain" description="PA14" evidence="3">
    <location>
        <begin position="389"/>
        <end position="548"/>
    </location>
</feature>
<feature type="active site" evidence="1">
    <location>
        <position position="225"/>
    </location>
</feature>
<feature type="glycosylation site" description="N-linked (GlcNAc...) asparagine" evidence="2">
    <location>
        <position position="13"/>
    </location>
</feature>
<feature type="glycosylation site" description="N-linked (GlcNAc...) asparagine" evidence="2">
    <location>
        <position position="304"/>
    </location>
</feature>
<feature type="glycosylation site" description="N-linked (GlcNAc...) asparagine" evidence="2">
    <location>
        <position position="473"/>
    </location>
</feature>
<feature type="glycosylation site" description="N-linked (GlcNAc...) asparagine" evidence="2">
    <location>
        <position position="602"/>
    </location>
</feature>
<feature type="glycosylation site" description="N-linked (GlcNAc...) asparagine" evidence="2">
    <location>
        <position position="627"/>
    </location>
</feature>
<feature type="glycosylation site" description="N-linked (GlcNAc...) asparagine" evidence="2">
    <location>
        <position position="664"/>
    </location>
</feature>
<comment type="function">
    <text evidence="1">Beta-glucosidases are one of a number of cellulolytic enzymes involved in the degradation of cellulosic biomass. Catalyzes the last step releasing glucose from the inhibitory cellobiose (By similarity).</text>
</comment>
<comment type="catalytic activity">
    <reaction>
        <text>Hydrolysis of terminal, non-reducing beta-D-glucosyl residues with release of beta-D-glucose.</text>
        <dbReference type="EC" id="3.2.1.21"/>
    </reaction>
</comment>
<comment type="pathway">
    <text>Glycan metabolism; cellulose degradation.</text>
</comment>
<comment type="subcellular location">
    <subcellularLocation>
        <location evidence="1">Secreted</location>
    </subcellularLocation>
</comment>
<comment type="similarity">
    <text evidence="4">Belongs to the glycosyl hydrolase 3 family.</text>
</comment>
<dbReference type="EC" id="3.2.1.21"/>
<dbReference type="EMBL" id="DS027698">
    <property type="protein sequence ID" value="EAW16681.1"/>
    <property type="molecule type" value="Genomic_DNA"/>
</dbReference>
<dbReference type="RefSeq" id="XP_001258578.1">
    <property type="nucleotide sequence ID" value="XM_001258577.1"/>
</dbReference>
<dbReference type="SMR" id="A1DPG0"/>
<dbReference type="STRING" id="331117.A1DPG0"/>
<dbReference type="GlyCosmos" id="A1DPG0">
    <property type="glycosylation" value="6 sites, No reported glycans"/>
</dbReference>
<dbReference type="EnsemblFungi" id="EAW16681">
    <property type="protein sequence ID" value="EAW16681"/>
    <property type="gene ID" value="NFIA_060370"/>
</dbReference>
<dbReference type="GeneID" id="4585094"/>
<dbReference type="KEGG" id="nfi:NFIA_060370"/>
<dbReference type="VEuPathDB" id="FungiDB:NFIA_060370"/>
<dbReference type="eggNOG" id="ENOG502SMPY">
    <property type="taxonomic scope" value="Eukaryota"/>
</dbReference>
<dbReference type="HOGENOM" id="CLU_004542_4_0_1"/>
<dbReference type="OMA" id="DVKHNPA"/>
<dbReference type="OrthoDB" id="47059at2759"/>
<dbReference type="UniPathway" id="UPA00696"/>
<dbReference type="Proteomes" id="UP000006702">
    <property type="component" value="Unassembled WGS sequence"/>
</dbReference>
<dbReference type="GO" id="GO:0005576">
    <property type="term" value="C:extracellular region"/>
    <property type="evidence" value="ECO:0007669"/>
    <property type="project" value="UniProtKB-SubCell"/>
</dbReference>
<dbReference type="GO" id="GO:0008422">
    <property type="term" value="F:beta-glucosidase activity"/>
    <property type="evidence" value="ECO:0007669"/>
    <property type="project" value="UniProtKB-EC"/>
</dbReference>
<dbReference type="GO" id="GO:0030245">
    <property type="term" value="P:cellulose catabolic process"/>
    <property type="evidence" value="ECO:0007669"/>
    <property type="project" value="UniProtKB-UniPathway"/>
</dbReference>
<dbReference type="FunFam" id="3.20.20.300:FF:000006">
    <property type="entry name" value="Beta-glucosidase H"/>
    <property type="match status" value="1"/>
</dbReference>
<dbReference type="FunFam" id="2.60.40.10:FF:000495">
    <property type="entry name" value="Periplasmic beta-glucosidase"/>
    <property type="match status" value="1"/>
</dbReference>
<dbReference type="FunFam" id="2.60.120.260:FF:000155">
    <property type="entry name" value="Probable beta-glucosidase H"/>
    <property type="match status" value="1"/>
</dbReference>
<dbReference type="Gene3D" id="2.60.120.260">
    <property type="entry name" value="Galactose-binding domain-like"/>
    <property type="match status" value="1"/>
</dbReference>
<dbReference type="Gene3D" id="3.40.50.1700">
    <property type="entry name" value="Glycoside hydrolase family 3 C-terminal domain"/>
    <property type="match status" value="1"/>
</dbReference>
<dbReference type="Gene3D" id="3.20.20.300">
    <property type="entry name" value="Glycoside hydrolase, family 3, N-terminal domain"/>
    <property type="match status" value="1"/>
</dbReference>
<dbReference type="Gene3D" id="2.60.40.10">
    <property type="entry name" value="Immunoglobulins"/>
    <property type="match status" value="1"/>
</dbReference>
<dbReference type="InterPro" id="IPR050288">
    <property type="entry name" value="Cellulose_deg_GH3"/>
</dbReference>
<dbReference type="InterPro" id="IPR026891">
    <property type="entry name" value="Fn3-like"/>
</dbReference>
<dbReference type="InterPro" id="IPR002772">
    <property type="entry name" value="Glyco_hydro_3_C"/>
</dbReference>
<dbReference type="InterPro" id="IPR036881">
    <property type="entry name" value="Glyco_hydro_3_C_sf"/>
</dbReference>
<dbReference type="InterPro" id="IPR001764">
    <property type="entry name" value="Glyco_hydro_3_N"/>
</dbReference>
<dbReference type="InterPro" id="IPR036962">
    <property type="entry name" value="Glyco_hydro_3_N_sf"/>
</dbReference>
<dbReference type="InterPro" id="IPR017853">
    <property type="entry name" value="Glycoside_hydrolase_SF"/>
</dbReference>
<dbReference type="InterPro" id="IPR013783">
    <property type="entry name" value="Ig-like_fold"/>
</dbReference>
<dbReference type="InterPro" id="IPR037524">
    <property type="entry name" value="PA14/GLEYA"/>
</dbReference>
<dbReference type="InterPro" id="IPR011658">
    <property type="entry name" value="PA14_dom"/>
</dbReference>
<dbReference type="PANTHER" id="PTHR42715">
    <property type="entry name" value="BETA-GLUCOSIDASE"/>
    <property type="match status" value="1"/>
</dbReference>
<dbReference type="PANTHER" id="PTHR42715:SF17">
    <property type="entry name" value="BETA-GLUCOSIDASE H-RELATED"/>
    <property type="match status" value="1"/>
</dbReference>
<dbReference type="Pfam" id="PF14310">
    <property type="entry name" value="Fn3-like"/>
    <property type="match status" value="1"/>
</dbReference>
<dbReference type="Pfam" id="PF00933">
    <property type="entry name" value="Glyco_hydro_3"/>
    <property type="match status" value="1"/>
</dbReference>
<dbReference type="Pfam" id="PF01915">
    <property type="entry name" value="Glyco_hydro_3_C"/>
    <property type="match status" value="1"/>
</dbReference>
<dbReference type="Pfam" id="PF07691">
    <property type="entry name" value="PA14"/>
    <property type="match status" value="1"/>
</dbReference>
<dbReference type="PRINTS" id="PR00133">
    <property type="entry name" value="GLHYDRLASE3"/>
</dbReference>
<dbReference type="SMART" id="SM01217">
    <property type="entry name" value="Fn3_like"/>
    <property type="match status" value="1"/>
</dbReference>
<dbReference type="SMART" id="SM00758">
    <property type="entry name" value="PA14"/>
    <property type="match status" value="1"/>
</dbReference>
<dbReference type="SUPFAM" id="SSF51445">
    <property type="entry name" value="(Trans)glycosidases"/>
    <property type="match status" value="1"/>
</dbReference>
<dbReference type="SUPFAM" id="SSF56988">
    <property type="entry name" value="Anthrax protective antigen"/>
    <property type="match status" value="1"/>
</dbReference>
<dbReference type="SUPFAM" id="SSF52279">
    <property type="entry name" value="Beta-D-glucan exohydrolase, C-terminal domain"/>
    <property type="match status" value="1"/>
</dbReference>
<dbReference type="PROSITE" id="PS51820">
    <property type="entry name" value="PA14"/>
    <property type="match status" value="1"/>
</dbReference>
<accession>A1DPG0</accession>
<reference key="1">
    <citation type="journal article" date="2008" name="PLoS Genet.">
        <title>Genomic islands in the pathogenic filamentous fungus Aspergillus fumigatus.</title>
        <authorList>
            <person name="Fedorova N.D."/>
            <person name="Khaldi N."/>
            <person name="Joardar V.S."/>
            <person name="Maiti R."/>
            <person name="Amedeo P."/>
            <person name="Anderson M.J."/>
            <person name="Crabtree J."/>
            <person name="Silva J.C."/>
            <person name="Badger J.H."/>
            <person name="Albarraq A."/>
            <person name="Angiuoli S."/>
            <person name="Bussey H."/>
            <person name="Bowyer P."/>
            <person name="Cotty P.J."/>
            <person name="Dyer P.S."/>
            <person name="Egan A."/>
            <person name="Galens K."/>
            <person name="Fraser-Liggett C.M."/>
            <person name="Haas B.J."/>
            <person name="Inman J.M."/>
            <person name="Kent R."/>
            <person name="Lemieux S."/>
            <person name="Malavazi I."/>
            <person name="Orvis J."/>
            <person name="Roemer T."/>
            <person name="Ronning C.M."/>
            <person name="Sundaram J.P."/>
            <person name="Sutton G."/>
            <person name="Turner G."/>
            <person name="Venter J.C."/>
            <person name="White O.R."/>
            <person name="Whitty B.R."/>
            <person name="Youngman P."/>
            <person name="Wolfe K.H."/>
            <person name="Goldman G.H."/>
            <person name="Wortman J.R."/>
            <person name="Jiang B."/>
            <person name="Denning D.W."/>
            <person name="Nierman W.C."/>
        </authorList>
    </citation>
    <scope>NUCLEOTIDE SEQUENCE [LARGE SCALE GENOMIC DNA]</scope>
    <source>
        <strain>ATCC 1020 / DSM 3700 / CBS 544.65 / FGSC A1164 / JCM 1740 / NRRL 181 / WB 181</strain>
    </source>
</reference>
<gene>
    <name type="primary">bglH</name>
    <name type="ORF">NFIA_060370</name>
</gene>
<organism>
    <name type="scientific">Neosartorya fischeri (strain ATCC 1020 / DSM 3700 / CBS 544.65 / FGSC A1164 / JCM 1740 / NRRL 181 / WB 181)</name>
    <name type="common">Aspergillus fischerianus</name>
    <dbReference type="NCBI Taxonomy" id="331117"/>
    <lineage>
        <taxon>Eukaryota</taxon>
        <taxon>Fungi</taxon>
        <taxon>Dikarya</taxon>
        <taxon>Ascomycota</taxon>
        <taxon>Pezizomycotina</taxon>
        <taxon>Eurotiomycetes</taxon>
        <taxon>Eurotiomycetidae</taxon>
        <taxon>Eurotiales</taxon>
        <taxon>Aspergillaceae</taxon>
        <taxon>Aspergillus</taxon>
        <taxon>Aspergillus subgen. Fumigati</taxon>
    </lineage>
</organism>
<keyword id="KW-0119">Carbohydrate metabolism</keyword>
<keyword id="KW-0136">Cellulose degradation</keyword>
<keyword id="KW-0325">Glycoprotein</keyword>
<keyword id="KW-0326">Glycosidase</keyword>
<keyword id="KW-0378">Hydrolase</keyword>
<keyword id="KW-0624">Polysaccharide degradation</keyword>
<keyword id="KW-1185">Reference proteome</keyword>
<keyword id="KW-0964">Secreted</keyword>
<protein>
    <recommendedName>
        <fullName>Probable beta-glucosidase H</fullName>
        <ecNumber>3.2.1.21</ecNumber>
    </recommendedName>
    <alternativeName>
        <fullName>Beta-D-glucoside glucohydrolase H</fullName>
    </alternativeName>
    <alternativeName>
        <fullName>Cellobiase H</fullName>
    </alternativeName>
    <alternativeName>
        <fullName>Gentiobiase H</fullName>
    </alternativeName>
</protein>